<accession>Q21MI9</accession>
<protein>
    <recommendedName>
        <fullName evidence="1">Thiamine-phosphate synthase</fullName>
        <shortName evidence="1">TP synthase</shortName>
        <shortName evidence="1">TPS</shortName>
        <ecNumber evidence="1">2.5.1.3</ecNumber>
    </recommendedName>
    <alternativeName>
        <fullName evidence="1">Thiamine-phosphate pyrophosphorylase</fullName>
        <shortName evidence="1">TMP pyrophosphorylase</shortName>
        <shortName evidence="1">TMP-PPase</shortName>
    </alternativeName>
</protein>
<feature type="chain" id="PRO_0000336425" description="Thiamine-phosphate synthase">
    <location>
        <begin position="1"/>
        <end position="217"/>
    </location>
</feature>
<feature type="binding site" evidence="1">
    <location>
        <begin position="39"/>
        <end position="43"/>
    </location>
    <ligand>
        <name>4-amino-2-methyl-5-(diphosphooxymethyl)pyrimidine</name>
        <dbReference type="ChEBI" id="CHEBI:57841"/>
    </ligand>
</feature>
<feature type="binding site" evidence="1">
    <location>
        <position position="71"/>
    </location>
    <ligand>
        <name>4-amino-2-methyl-5-(diphosphooxymethyl)pyrimidine</name>
        <dbReference type="ChEBI" id="CHEBI:57841"/>
    </ligand>
</feature>
<feature type="binding site" evidence="1">
    <location>
        <position position="72"/>
    </location>
    <ligand>
        <name>Mg(2+)</name>
        <dbReference type="ChEBI" id="CHEBI:18420"/>
    </ligand>
</feature>
<feature type="binding site" evidence="1">
    <location>
        <position position="91"/>
    </location>
    <ligand>
        <name>Mg(2+)</name>
        <dbReference type="ChEBI" id="CHEBI:18420"/>
    </ligand>
</feature>
<feature type="binding site" evidence="1">
    <location>
        <position position="110"/>
    </location>
    <ligand>
        <name>4-amino-2-methyl-5-(diphosphooxymethyl)pyrimidine</name>
        <dbReference type="ChEBI" id="CHEBI:57841"/>
    </ligand>
</feature>
<feature type="binding site" evidence="1">
    <location>
        <begin position="137"/>
        <end position="139"/>
    </location>
    <ligand>
        <name>2-[(2R,5Z)-2-carboxy-4-methylthiazol-5(2H)-ylidene]ethyl phosphate</name>
        <dbReference type="ChEBI" id="CHEBI:62899"/>
    </ligand>
</feature>
<feature type="binding site" evidence="1">
    <location>
        <position position="140"/>
    </location>
    <ligand>
        <name>4-amino-2-methyl-5-(diphosphooxymethyl)pyrimidine</name>
        <dbReference type="ChEBI" id="CHEBI:57841"/>
    </ligand>
</feature>
<feature type="binding site" evidence="1">
    <location>
        <position position="167"/>
    </location>
    <ligand>
        <name>2-[(2R,5Z)-2-carboxy-4-methylthiazol-5(2H)-ylidene]ethyl phosphate</name>
        <dbReference type="ChEBI" id="CHEBI:62899"/>
    </ligand>
</feature>
<comment type="function">
    <text evidence="1">Condenses 4-methyl-5-(beta-hydroxyethyl)thiazole monophosphate (THZ-P) and 2-methyl-4-amino-5-hydroxymethyl pyrimidine pyrophosphate (HMP-PP) to form thiamine monophosphate (TMP).</text>
</comment>
<comment type="catalytic activity">
    <reaction evidence="1">
        <text>2-[(2R,5Z)-2-carboxy-4-methylthiazol-5(2H)-ylidene]ethyl phosphate + 4-amino-2-methyl-5-(diphosphooxymethyl)pyrimidine + 2 H(+) = thiamine phosphate + CO2 + diphosphate</text>
        <dbReference type="Rhea" id="RHEA:47844"/>
        <dbReference type="ChEBI" id="CHEBI:15378"/>
        <dbReference type="ChEBI" id="CHEBI:16526"/>
        <dbReference type="ChEBI" id="CHEBI:33019"/>
        <dbReference type="ChEBI" id="CHEBI:37575"/>
        <dbReference type="ChEBI" id="CHEBI:57841"/>
        <dbReference type="ChEBI" id="CHEBI:62899"/>
        <dbReference type="EC" id="2.5.1.3"/>
    </reaction>
</comment>
<comment type="catalytic activity">
    <reaction evidence="1">
        <text>2-(2-carboxy-4-methylthiazol-5-yl)ethyl phosphate + 4-amino-2-methyl-5-(diphosphooxymethyl)pyrimidine + 2 H(+) = thiamine phosphate + CO2 + diphosphate</text>
        <dbReference type="Rhea" id="RHEA:47848"/>
        <dbReference type="ChEBI" id="CHEBI:15378"/>
        <dbReference type="ChEBI" id="CHEBI:16526"/>
        <dbReference type="ChEBI" id="CHEBI:33019"/>
        <dbReference type="ChEBI" id="CHEBI:37575"/>
        <dbReference type="ChEBI" id="CHEBI:57841"/>
        <dbReference type="ChEBI" id="CHEBI:62890"/>
        <dbReference type="EC" id="2.5.1.3"/>
    </reaction>
</comment>
<comment type="catalytic activity">
    <reaction evidence="1">
        <text>4-methyl-5-(2-phosphooxyethyl)-thiazole + 4-amino-2-methyl-5-(diphosphooxymethyl)pyrimidine + H(+) = thiamine phosphate + diphosphate</text>
        <dbReference type="Rhea" id="RHEA:22328"/>
        <dbReference type="ChEBI" id="CHEBI:15378"/>
        <dbReference type="ChEBI" id="CHEBI:33019"/>
        <dbReference type="ChEBI" id="CHEBI:37575"/>
        <dbReference type="ChEBI" id="CHEBI:57841"/>
        <dbReference type="ChEBI" id="CHEBI:58296"/>
        <dbReference type="EC" id="2.5.1.3"/>
    </reaction>
</comment>
<comment type="cofactor">
    <cofactor evidence="1">
        <name>Mg(2+)</name>
        <dbReference type="ChEBI" id="CHEBI:18420"/>
    </cofactor>
    <text evidence="1">Binds 1 Mg(2+) ion per subunit.</text>
</comment>
<comment type="pathway">
    <text evidence="1">Cofactor biosynthesis; thiamine diphosphate biosynthesis; thiamine phosphate from 4-amino-2-methyl-5-diphosphomethylpyrimidine and 4-methyl-5-(2-phosphoethyl)-thiazole: step 1/1.</text>
</comment>
<comment type="similarity">
    <text evidence="1">Belongs to the thiamine-phosphate synthase family.</text>
</comment>
<name>THIE_SACD2</name>
<proteinExistence type="inferred from homology"/>
<organism>
    <name type="scientific">Saccharophagus degradans (strain 2-40 / ATCC 43961 / DSM 17024)</name>
    <dbReference type="NCBI Taxonomy" id="203122"/>
    <lineage>
        <taxon>Bacteria</taxon>
        <taxon>Pseudomonadati</taxon>
        <taxon>Pseudomonadota</taxon>
        <taxon>Gammaproteobacteria</taxon>
        <taxon>Cellvibrionales</taxon>
        <taxon>Cellvibrionaceae</taxon>
        <taxon>Saccharophagus</taxon>
    </lineage>
</organism>
<dbReference type="EC" id="2.5.1.3" evidence="1"/>
<dbReference type="EMBL" id="CP000282">
    <property type="protein sequence ID" value="ABD80090.1"/>
    <property type="molecule type" value="Genomic_DNA"/>
</dbReference>
<dbReference type="RefSeq" id="WP_011467311.1">
    <property type="nucleotide sequence ID" value="NC_007912.1"/>
</dbReference>
<dbReference type="SMR" id="Q21MI9"/>
<dbReference type="STRING" id="203122.Sde_0828"/>
<dbReference type="GeneID" id="98612510"/>
<dbReference type="KEGG" id="sde:Sde_0828"/>
<dbReference type="eggNOG" id="COG0352">
    <property type="taxonomic scope" value="Bacteria"/>
</dbReference>
<dbReference type="HOGENOM" id="CLU_018272_3_1_6"/>
<dbReference type="OrthoDB" id="9810880at2"/>
<dbReference type="UniPathway" id="UPA00060">
    <property type="reaction ID" value="UER00141"/>
</dbReference>
<dbReference type="Proteomes" id="UP000001947">
    <property type="component" value="Chromosome"/>
</dbReference>
<dbReference type="GO" id="GO:0005737">
    <property type="term" value="C:cytoplasm"/>
    <property type="evidence" value="ECO:0007669"/>
    <property type="project" value="TreeGrafter"/>
</dbReference>
<dbReference type="GO" id="GO:0000287">
    <property type="term" value="F:magnesium ion binding"/>
    <property type="evidence" value="ECO:0007669"/>
    <property type="project" value="UniProtKB-UniRule"/>
</dbReference>
<dbReference type="GO" id="GO:0004789">
    <property type="term" value="F:thiamine-phosphate diphosphorylase activity"/>
    <property type="evidence" value="ECO:0007669"/>
    <property type="project" value="UniProtKB-UniRule"/>
</dbReference>
<dbReference type="GO" id="GO:0009228">
    <property type="term" value="P:thiamine biosynthetic process"/>
    <property type="evidence" value="ECO:0007669"/>
    <property type="project" value="UniProtKB-KW"/>
</dbReference>
<dbReference type="GO" id="GO:0009229">
    <property type="term" value="P:thiamine diphosphate biosynthetic process"/>
    <property type="evidence" value="ECO:0007669"/>
    <property type="project" value="UniProtKB-UniRule"/>
</dbReference>
<dbReference type="CDD" id="cd00564">
    <property type="entry name" value="TMP_TenI"/>
    <property type="match status" value="1"/>
</dbReference>
<dbReference type="Gene3D" id="3.20.20.70">
    <property type="entry name" value="Aldolase class I"/>
    <property type="match status" value="1"/>
</dbReference>
<dbReference type="HAMAP" id="MF_00097">
    <property type="entry name" value="TMP_synthase"/>
    <property type="match status" value="1"/>
</dbReference>
<dbReference type="InterPro" id="IPR013785">
    <property type="entry name" value="Aldolase_TIM"/>
</dbReference>
<dbReference type="InterPro" id="IPR036206">
    <property type="entry name" value="ThiamineP_synth_sf"/>
</dbReference>
<dbReference type="InterPro" id="IPR022998">
    <property type="entry name" value="ThiamineP_synth_TenI"/>
</dbReference>
<dbReference type="InterPro" id="IPR034291">
    <property type="entry name" value="TMP_synthase"/>
</dbReference>
<dbReference type="NCBIfam" id="TIGR00693">
    <property type="entry name" value="thiE"/>
    <property type="match status" value="1"/>
</dbReference>
<dbReference type="PANTHER" id="PTHR20857">
    <property type="entry name" value="THIAMINE-PHOSPHATE PYROPHOSPHORYLASE"/>
    <property type="match status" value="1"/>
</dbReference>
<dbReference type="PANTHER" id="PTHR20857:SF15">
    <property type="entry name" value="THIAMINE-PHOSPHATE SYNTHASE"/>
    <property type="match status" value="1"/>
</dbReference>
<dbReference type="Pfam" id="PF02581">
    <property type="entry name" value="TMP-TENI"/>
    <property type="match status" value="1"/>
</dbReference>
<dbReference type="SUPFAM" id="SSF51391">
    <property type="entry name" value="Thiamin phosphate synthase"/>
    <property type="match status" value="1"/>
</dbReference>
<keyword id="KW-0460">Magnesium</keyword>
<keyword id="KW-0479">Metal-binding</keyword>
<keyword id="KW-1185">Reference proteome</keyword>
<keyword id="KW-0784">Thiamine biosynthesis</keyword>
<keyword id="KW-0808">Transferase</keyword>
<sequence>MPHNKHTVYAITDATLMPTTASLCHRVELALRSGVTWLQYRDKSSNTSKRSEQAQALKALCQTYNAKLIINDDTALAKQVGADGVHLGQTDGCIVSARELLGPQAIIGSTCHASLELAERALAQGSSYVAFGRFFASNTKPNAAPAQLSLLAHAQQKFTCPIVAIGGITPSNGAQLLHAGATTLAVCHSLFADDNVEYRAKCLLGLTPNAEDALVTS</sequence>
<evidence type="ECO:0000255" key="1">
    <source>
        <dbReference type="HAMAP-Rule" id="MF_00097"/>
    </source>
</evidence>
<reference key="1">
    <citation type="journal article" date="2008" name="PLoS Genet.">
        <title>Complete genome sequence of the complex carbohydrate-degrading marine bacterium, Saccharophagus degradans strain 2-40 T.</title>
        <authorList>
            <person name="Weiner R.M."/>
            <person name="Taylor L.E. II"/>
            <person name="Henrissat B."/>
            <person name="Hauser L."/>
            <person name="Land M."/>
            <person name="Coutinho P.M."/>
            <person name="Rancurel C."/>
            <person name="Saunders E.H."/>
            <person name="Longmire A.G."/>
            <person name="Zhang H."/>
            <person name="Bayer E.A."/>
            <person name="Gilbert H.J."/>
            <person name="Larimer F."/>
            <person name="Zhulin I.B."/>
            <person name="Ekborg N.A."/>
            <person name="Lamed R."/>
            <person name="Richardson P.M."/>
            <person name="Borovok I."/>
            <person name="Hutcheson S."/>
        </authorList>
    </citation>
    <scope>NUCLEOTIDE SEQUENCE [LARGE SCALE GENOMIC DNA]</scope>
    <source>
        <strain>2-40 / ATCC 43961 / DSM 17024</strain>
    </source>
</reference>
<gene>
    <name evidence="1" type="primary">thiE</name>
    <name type="ordered locus">Sde_0828</name>
</gene>